<sequence>MPDIGLEEVEIIEILVSINEKIAPEQGLITVEGDKTSMEIPSPISGIVKHIFIKIGEKIKTDALIMRCEVENIDFHVKKKEEICLDNNVLNKVEKNFKKDIFFHATPLIRRLARNLNINLYDVVGTGPKNRILKEDLDLYQSNIKENLIEEKNKINFGDSKKSKTKELELSDIQKNIGNNLHRNWMNIPHVTQFDEVDITILEKFRQKYNNEKRNQKKTNENITILVFIIKVVAYALEKFPIFNSSLNINNKKIILKKYINIGFAIDVNNDLFVPVLKDVNKKNIKQLSSELILLSEKARTRKLNIEDMTGGCFTISNLGGIGGSWFSPIINSPEVAILGISKSQIKPSWNGKEFIPSLMLPLSLSYDHRVINGAYAARFITFISRVLSDMHFLIM</sequence>
<name>ODP2_BUCAI</name>
<organism>
    <name type="scientific">Buchnera aphidicola subsp. Acyrthosiphon pisum (strain APS)</name>
    <name type="common">Acyrthosiphon pisum symbiotic bacterium</name>
    <dbReference type="NCBI Taxonomy" id="107806"/>
    <lineage>
        <taxon>Bacteria</taxon>
        <taxon>Pseudomonadati</taxon>
        <taxon>Pseudomonadota</taxon>
        <taxon>Gammaproteobacteria</taxon>
        <taxon>Enterobacterales</taxon>
        <taxon>Erwiniaceae</taxon>
        <taxon>Buchnera</taxon>
    </lineage>
</organism>
<reference key="1">
    <citation type="journal article" date="2000" name="Nature">
        <title>Genome sequence of the endocellular bacterial symbiont of aphids Buchnera sp. APS.</title>
        <authorList>
            <person name="Shigenobu S."/>
            <person name="Watanabe H."/>
            <person name="Hattori M."/>
            <person name="Sakaki Y."/>
            <person name="Ishikawa H."/>
        </authorList>
    </citation>
    <scope>NUCLEOTIDE SEQUENCE [LARGE SCALE GENOMIC DNA]</scope>
    <source>
        <strain>APS</strain>
    </source>
</reference>
<keyword id="KW-0012">Acyltransferase</keyword>
<keyword id="KW-0450">Lipoyl</keyword>
<keyword id="KW-1185">Reference proteome</keyword>
<keyword id="KW-0808">Transferase</keyword>
<proteinExistence type="inferred from homology"/>
<feature type="chain" id="PRO_0000162275" description="Dihydrolipoyllysine-residue acetyltransferase component of pyruvate dehydrogenase complex">
    <location>
        <begin position="1"/>
        <end position="396"/>
    </location>
</feature>
<feature type="domain" description="Lipoyl-binding" evidence="3">
    <location>
        <begin position="1"/>
        <end position="69"/>
    </location>
</feature>
<feature type="domain" description="Peripheral subunit-binding (PSBD)" evidence="4">
    <location>
        <begin position="104"/>
        <end position="141"/>
    </location>
</feature>
<feature type="active site" evidence="2">
    <location>
        <position position="369"/>
    </location>
</feature>
<feature type="modified residue" description="N6-lipoyllysine" evidence="1 3">
    <location>
        <position position="35"/>
    </location>
</feature>
<protein>
    <recommendedName>
        <fullName>Dihydrolipoyllysine-residue acetyltransferase component of pyruvate dehydrogenase complex</fullName>
        <ecNumber>2.3.1.12</ecNumber>
    </recommendedName>
    <alternativeName>
        <fullName>Dihydrolipoamide acetyltransferase component of pyruvate dehydrogenase complex</fullName>
    </alternativeName>
    <alternativeName>
        <fullName>E2</fullName>
    </alternativeName>
</protein>
<comment type="function">
    <text evidence="1">The pyruvate dehydrogenase complex catalyzes the overall conversion of pyruvate to acetyl-CoA and CO(2). It contains multiple copies of three enzymatic components: pyruvate dehydrogenase (E1), dihydrolipoamide acetyltransferase (E2) and lipoamide dehydrogenase (E3) (By similarity).</text>
</comment>
<comment type="catalytic activity">
    <reaction>
        <text>N(6)-[(R)-dihydrolipoyl]-L-lysyl-[protein] + acetyl-CoA = N(6)-[(R)-S(8)-acetyldihydrolipoyl]-L-lysyl-[protein] + CoA</text>
        <dbReference type="Rhea" id="RHEA:17017"/>
        <dbReference type="Rhea" id="RHEA-COMP:10475"/>
        <dbReference type="Rhea" id="RHEA-COMP:10478"/>
        <dbReference type="ChEBI" id="CHEBI:57287"/>
        <dbReference type="ChEBI" id="CHEBI:57288"/>
        <dbReference type="ChEBI" id="CHEBI:83100"/>
        <dbReference type="ChEBI" id="CHEBI:83111"/>
        <dbReference type="EC" id="2.3.1.12"/>
    </reaction>
</comment>
<comment type="cofactor">
    <cofactor evidence="1">
        <name>(R)-lipoate</name>
        <dbReference type="ChEBI" id="CHEBI:83088"/>
    </cofactor>
    <text evidence="1">Binds 1 lipoyl cofactor covalently.</text>
</comment>
<comment type="subunit">
    <text evidence="1">Forms a 24-polypeptide structural core with octahedral symmetry.</text>
</comment>
<comment type="similarity">
    <text evidence="5">Belongs to the 2-oxoacid dehydrogenase family.</text>
</comment>
<evidence type="ECO:0000250" key="1"/>
<evidence type="ECO:0000255" key="2"/>
<evidence type="ECO:0000255" key="3">
    <source>
        <dbReference type="PROSITE-ProRule" id="PRU01066"/>
    </source>
</evidence>
<evidence type="ECO:0000255" key="4">
    <source>
        <dbReference type="PROSITE-ProRule" id="PRU01170"/>
    </source>
</evidence>
<evidence type="ECO:0000305" key="5"/>
<gene>
    <name type="primary">aceF</name>
    <name type="ordered locus">BU206</name>
</gene>
<accession>P57302</accession>
<dbReference type="EC" id="2.3.1.12"/>
<dbReference type="EMBL" id="BA000003">
    <property type="protein sequence ID" value="BAB12923.1"/>
    <property type="molecule type" value="Genomic_DNA"/>
</dbReference>
<dbReference type="RefSeq" id="NP_240037.2">
    <property type="nucleotide sequence ID" value="NC_002528.1"/>
</dbReference>
<dbReference type="SMR" id="P57302"/>
<dbReference type="STRING" id="563178.BUAP5A_203"/>
<dbReference type="EnsemblBacteria" id="BAB12923">
    <property type="protein sequence ID" value="BAB12923"/>
    <property type="gene ID" value="BAB12923"/>
</dbReference>
<dbReference type="KEGG" id="buc:BU206"/>
<dbReference type="PATRIC" id="fig|107806.10.peg.217"/>
<dbReference type="eggNOG" id="COG0508">
    <property type="taxonomic scope" value="Bacteria"/>
</dbReference>
<dbReference type="HOGENOM" id="CLU_016733_10_0_6"/>
<dbReference type="Proteomes" id="UP000001806">
    <property type="component" value="Chromosome"/>
</dbReference>
<dbReference type="GO" id="GO:0005737">
    <property type="term" value="C:cytoplasm"/>
    <property type="evidence" value="ECO:0007669"/>
    <property type="project" value="TreeGrafter"/>
</dbReference>
<dbReference type="GO" id="GO:0004742">
    <property type="term" value="F:dihydrolipoyllysine-residue acetyltransferase activity"/>
    <property type="evidence" value="ECO:0007669"/>
    <property type="project" value="UniProtKB-EC"/>
</dbReference>
<dbReference type="GO" id="GO:0031405">
    <property type="term" value="F:lipoic acid binding"/>
    <property type="evidence" value="ECO:0007669"/>
    <property type="project" value="TreeGrafter"/>
</dbReference>
<dbReference type="GO" id="GO:0006086">
    <property type="term" value="P:pyruvate decarboxylation to acetyl-CoA"/>
    <property type="evidence" value="ECO:0007669"/>
    <property type="project" value="TreeGrafter"/>
</dbReference>
<dbReference type="CDD" id="cd06849">
    <property type="entry name" value="lipoyl_domain"/>
    <property type="match status" value="1"/>
</dbReference>
<dbReference type="FunFam" id="3.30.559.10:FF:000004">
    <property type="entry name" value="Acetyltransferase component of pyruvate dehydrogenase complex"/>
    <property type="match status" value="1"/>
</dbReference>
<dbReference type="Gene3D" id="2.40.50.100">
    <property type="match status" value="1"/>
</dbReference>
<dbReference type="Gene3D" id="3.30.559.10">
    <property type="entry name" value="Chloramphenicol acetyltransferase-like domain"/>
    <property type="match status" value="1"/>
</dbReference>
<dbReference type="Gene3D" id="4.10.320.10">
    <property type="entry name" value="E3-binding domain"/>
    <property type="match status" value="1"/>
</dbReference>
<dbReference type="InterPro" id="IPR003016">
    <property type="entry name" value="2-oxoA_DH_lipoyl-BS"/>
</dbReference>
<dbReference type="InterPro" id="IPR001078">
    <property type="entry name" value="2-oxoacid_DH_actylTfrase"/>
</dbReference>
<dbReference type="InterPro" id="IPR050743">
    <property type="entry name" value="2-oxoacid_DH_E2_comp"/>
</dbReference>
<dbReference type="InterPro" id="IPR000089">
    <property type="entry name" value="Biotin_lipoyl"/>
</dbReference>
<dbReference type="InterPro" id="IPR023213">
    <property type="entry name" value="CAT-like_dom_sf"/>
</dbReference>
<dbReference type="InterPro" id="IPR036625">
    <property type="entry name" value="E3-bd_dom_sf"/>
</dbReference>
<dbReference type="InterPro" id="IPR004167">
    <property type="entry name" value="PSBD"/>
</dbReference>
<dbReference type="InterPro" id="IPR011053">
    <property type="entry name" value="Single_hybrid_motif"/>
</dbReference>
<dbReference type="PANTHER" id="PTHR43178">
    <property type="entry name" value="DIHYDROLIPOAMIDE ACETYLTRANSFERASE COMPONENT OF PYRUVATE DEHYDROGENASE COMPLEX"/>
    <property type="match status" value="1"/>
</dbReference>
<dbReference type="PANTHER" id="PTHR43178:SF2">
    <property type="entry name" value="DIHYDROLIPOYLLYSINE-RESIDUE ACETYLTRANSFERASE COMPONENT OF PYRUVATE DEHYDROGENASE COMPLEX"/>
    <property type="match status" value="1"/>
</dbReference>
<dbReference type="Pfam" id="PF00198">
    <property type="entry name" value="2-oxoacid_dh"/>
    <property type="match status" value="1"/>
</dbReference>
<dbReference type="Pfam" id="PF00364">
    <property type="entry name" value="Biotin_lipoyl"/>
    <property type="match status" value="1"/>
</dbReference>
<dbReference type="Pfam" id="PF02817">
    <property type="entry name" value="E3_binding"/>
    <property type="match status" value="1"/>
</dbReference>
<dbReference type="SUPFAM" id="SSF52777">
    <property type="entry name" value="CoA-dependent acyltransferases"/>
    <property type="match status" value="1"/>
</dbReference>
<dbReference type="SUPFAM" id="SSF47005">
    <property type="entry name" value="Peripheral subunit-binding domain of 2-oxo acid dehydrogenase complex"/>
    <property type="match status" value="1"/>
</dbReference>
<dbReference type="SUPFAM" id="SSF51230">
    <property type="entry name" value="Single hybrid motif"/>
    <property type="match status" value="1"/>
</dbReference>
<dbReference type="PROSITE" id="PS50968">
    <property type="entry name" value="BIOTINYL_LIPOYL"/>
    <property type="match status" value="1"/>
</dbReference>
<dbReference type="PROSITE" id="PS00189">
    <property type="entry name" value="LIPOYL"/>
    <property type="match status" value="1"/>
</dbReference>
<dbReference type="PROSITE" id="PS51826">
    <property type="entry name" value="PSBD"/>
    <property type="match status" value="1"/>
</dbReference>